<gene>
    <name type="primary">tti1</name>
    <name type="ORF">SPCC622.13c</name>
</gene>
<protein>
    <recommendedName>
        <fullName>TEL2-interacting protein 1</fullName>
    </recommendedName>
</protein>
<reference key="1">
    <citation type="journal article" date="2002" name="Nature">
        <title>The genome sequence of Schizosaccharomyces pombe.</title>
        <authorList>
            <person name="Wood V."/>
            <person name="Gwilliam R."/>
            <person name="Rajandream M.A."/>
            <person name="Lyne M.H."/>
            <person name="Lyne R."/>
            <person name="Stewart A."/>
            <person name="Sgouros J.G."/>
            <person name="Peat N."/>
            <person name="Hayles J."/>
            <person name="Baker S.G."/>
            <person name="Basham D."/>
            <person name="Bowman S."/>
            <person name="Brooks K."/>
            <person name="Brown D."/>
            <person name="Brown S."/>
            <person name="Chillingworth T."/>
            <person name="Churcher C.M."/>
            <person name="Collins M."/>
            <person name="Connor R."/>
            <person name="Cronin A."/>
            <person name="Davis P."/>
            <person name="Feltwell T."/>
            <person name="Fraser A."/>
            <person name="Gentles S."/>
            <person name="Goble A."/>
            <person name="Hamlin N."/>
            <person name="Harris D.E."/>
            <person name="Hidalgo J."/>
            <person name="Hodgson G."/>
            <person name="Holroyd S."/>
            <person name="Hornsby T."/>
            <person name="Howarth S."/>
            <person name="Huckle E.J."/>
            <person name="Hunt S."/>
            <person name="Jagels K."/>
            <person name="James K.D."/>
            <person name="Jones L."/>
            <person name="Jones M."/>
            <person name="Leather S."/>
            <person name="McDonald S."/>
            <person name="McLean J."/>
            <person name="Mooney P."/>
            <person name="Moule S."/>
            <person name="Mungall K.L."/>
            <person name="Murphy L.D."/>
            <person name="Niblett D."/>
            <person name="Odell C."/>
            <person name="Oliver K."/>
            <person name="O'Neil S."/>
            <person name="Pearson D."/>
            <person name="Quail M.A."/>
            <person name="Rabbinowitsch E."/>
            <person name="Rutherford K.M."/>
            <person name="Rutter S."/>
            <person name="Saunders D."/>
            <person name="Seeger K."/>
            <person name="Sharp S."/>
            <person name="Skelton J."/>
            <person name="Simmonds M.N."/>
            <person name="Squares R."/>
            <person name="Squares S."/>
            <person name="Stevens K."/>
            <person name="Taylor K."/>
            <person name="Taylor R.G."/>
            <person name="Tivey A."/>
            <person name="Walsh S.V."/>
            <person name="Warren T."/>
            <person name="Whitehead S."/>
            <person name="Woodward J.R."/>
            <person name="Volckaert G."/>
            <person name="Aert R."/>
            <person name="Robben J."/>
            <person name="Grymonprez B."/>
            <person name="Weltjens I."/>
            <person name="Vanstreels E."/>
            <person name="Rieger M."/>
            <person name="Schaefer M."/>
            <person name="Mueller-Auer S."/>
            <person name="Gabel C."/>
            <person name="Fuchs M."/>
            <person name="Duesterhoeft A."/>
            <person name="Fritzc C."/>
            <person name="Holzer E."/>
            <person name="Moestl D."/>
            <person name="Hilbert H."/>
            <person name="Borzym K."/>
            <person name="Langer I."/>
            <person name="Beck A."/>
            <person name="Lehrach H."/>
            <person name="Reinhardt R."/>
            <person name="Pohl T.M."/>
            <person name="Eger P."/>
            <person name="Zimmermann W."/>
            <person name="Wedler H."/>
            <person name="Wambutt R."/>
            <person name="Purnelle B."/>
            <person name="Goffeau A."/>
            <person name="Cadieu E."/>
            <person name="Dreano S."/>
            <person name="Gloux S."/>
            <person name="Lelaure V."/>
            <person name="Mottier S."/>
            <person name="Galibert F."/>
            <person name="Aves S.J."/>
            <person name="Xiang Z."/>
            <person name="Hunt C."/>
            <person name="Moore K."/>
            <person name="Hurst S.M."/>
            <person name="Lucas M."/>
            <person name="Rochet M."/>
            <person name="Gaillardin C."/>
            <person name="Tallada V.A."/>
            <person name="Garzon A."/>
            <person name="Thode G."/>
            <person name="Daga R.R."/>
            <person name="Cruzado L."/>
            <person name="Jimenez J."/>
            <person name="Sanchez M."/>
            <person name="del Rey F."/>
            <person name="Benito J."/>
            <person name="Dominguez A."/>
            <person name="Revuelta J.L."/>
            <person name="Moreno S."/>
            <person name="Armstrong J."/>
            <person name="Forsburg S.L."/>
            <person name="Cerutti L."/>
            <person name="Lowe T."/>
            <person name="McCombie W.R."/>
            <person name="Paulsen I."/>
            <person name="Potashkin J."/>
            <person name="Shpakovski G.V."/>
            <person name="Ussery D."/>
            <person name="Barrell B.G."/>
            <person name="Nurse P."/>
        </authorList>
    </citation>
    <scope>NUCLEOTIDE SEQUENCE [LARGE SCALE GENOMIC DNA]</scope>
    <source>
        <strain>972 / ATCC 24843</strain>
    </source>
</reference>
<reference key="2">
    <citation type="journal article" date="2007" name="Genes Cells">
        <title>Rapamycin sensitivity of the Schizosaccharomyces pombe tor2 mutant and organization of two highly phosphorylated TOR complexes by specific and common subunits.</title>
        <authorList>
            <person name="Hayashi T."/>
            <person name="Hatanaka M."/>
            <person name="Nagao K."/>
            <person name="Nakaseko Y."/>
            <person name="Kanoh J."/>
            <person name="Kokubu A."/>
            <person name="Ebe M."/>
            <person name="Yanagida M."/>
        </authorList>
    </citation>
    <scope>IDENTIFICATION IN THE TORC1 AND TORC2 COMPLEXES</scope>
    <scope>INTERACTION WITH TEL2</scope>
    <scope>IDENTIFICATION BY MASS SPECTROMETRY</scope>
</reference>
<name>TTI1_SCHPO</name>
<organism>
    <name type="scientific">Schizosaccharomyces pombe (strain 972 / ATCC 24843)</name>
    <name type="common">Fission yeast</name>
    <dbReference type="NCBI Taxonomy" id="284812"/>
    <lineage>
        <taxon>Eukaryota</taxon>
        <taxon>Fungi</taxon>
        <taxon>Dikarya</taxon>
        <taxon>Ascomycota</taxon>
        <taxon>Taphrinomycotina</taxon>
        <taxon>Schizosaccharomycetes</taxon>
        <taxon>Schizosaccharomycetales</taxon>
        <taxon>Schizosaccharomycetaceae</taxon>
        <taxon>Schizosaccharomyces</taxon>
    </lineage>
</organism>
<feature type="chain" id="PRO_0000353822" description="TEL2-interacting protein 1">
    <location>
        <begin position="1"/>
        <end position="1098"/>
    </location>
</feature>
<feature type="region of interest" description="Disordered" evidence="1">
    <location>
        <begin position="768"/>
        <end position="795"/>
    </location>
</feature>
<comment type="function">
    <text>Component of the TORC1 and TORC2 complexes required for the regulation of the cellular respons to changes in available nutrients.</text>
</comment>
<comment type="subunit">
    <text evidence="2">Component of the TORC1 complex composed of at least mip1, orb5, tel2, toc1, toc89, tor2, tti1 and wat1. Component of the TORC2 complex composed of at least bit61, orb5, sin1, ste20, tel2, tor1, tti1 and wat1. Interacts with tel2.</text>
</comment>
<comment type="subcellular location">
    <subcellularLocation>
        <location evidence="3">Cytoplasm</location>
    </subcellularLocation>
</comment>
<comment type="similarity">
    <text evidence="3">Belongs to the tti1 family.</text>
</comment>
<evidence type="ECO:0000256" key="1">
    <source>
        <dbReference type="SAM" id="MobiDB-lite"/>
    </source>
</evidence>
<evidence type="ECO:0000269" key="2">
    <source>
    </source>
</evidence>
<evidence type="ECO:0000305" key="3"/>
<proteinExistence type="evidence at protein level"/>
<keyword id="KW-0963">Cytoplasm</keyword>
<keyword id="KW-1185">Reference proteome</keyword>
<accession>O94600</accession>
<sequence>MSHIQSIFAQIRDPFRKLSFYSLPLSSETSSVDSNGLKNSLKDAYFGLEKALTNTDADLPLNLCDYIFFPIVPVLKSWYRVPSTGVEYAIQCVNLLYKHGWREAHNEMLTMQLLLMLLNIADGWKSPSETVEQDFRVREITFETLENVITDFKPNFHDKRQYLLFARALSSALDIIPNKNSSRRLQFASLCCVQKLICPKQYRLPTEFLTTFLPGIVSGLTKGLAPNGTCQYFKNVCISLNILGDTVVKAISDDNTKDLPDEKDASSNSHFFGPTKRTKSWKRATCQQLSNAVKAILHLRSSQNLHVQDALFDFCFILFRDCLDSLKDCRIHLLESMLKLINKKENPKLRDYGMNKLVSLIESFNNITMESVLTECLNDWSTTWSSVSTFASEDNKLEELNRLKSLLSISSHLPKTLQLMEPLLDGILSQLVPKSSGIDSNSQKLLTSSTSNEYIHGEFFGGNEMERTTQEIVTSFAKAPNVKYVMQSLLSKATSATNENSVRAFWAFMVLLKSDVETVDSLEMYIDSLEQYSFEVLQQLSQLNVFTKASLEDKQKKEKYNLLCVRSCIAIDSISWISSLQGVKFRSKLMAYFYPLLEHLAFASPYVSSFAEACIQAIATNCNYSTPAELLRENIDYVVNSVALKLNTLDVSPQLPIVMAYVIKNDDGGCIRYIGDVVDAIFGILDAYHGYARLTEGLLGILYAIIKQESINGEEKKLIVGVEEDAMNEDKNKPCKKIREFVQLLLENPNYPLPKDDHELEDMIHDEQQETKSGHEQFREHAMKEKEKKGKENENMGETTVDHENINSNVMDEQGEKQKDDVVDMVRKITEKAQLFLSHEQITIRVEMLKLLSYGSNVLAKEPNTFYPAINTFWPLVVIQLDTDNELLVECALETIYQVCALADDFMTSRIRQDLLPRLETLCQRWHLFNVARTYSSEHRLQRAMLKVTSACVANKLSIVVYLKLMGITAPIIRAITHMSQKYAGDESLVEETWNAFSKQNPDAVYYEREVRGSQMIDTFSTELLIPGKQRVQRTYRRTHEVLEPVGAKTSETVFNDLLGQQGSGKTETQEEPLPSLDNLLHLNQPKKGAKKPLISII</sequence>
<dbReference type="EMBL" id="CU329672">
    <property type="protein sequence ID" value="CAA21869.1"/>
    <property type="molecule type" value="Genomic_DNA"/>
</dbReference>
<dbReference type="PIR" id="T41493">
    <property type="entry name" value="T41493"/>
</dbReference>
<dbReference type="RefSeq" id="NP_588185.1">
    <property type="nucleotide sequence ID" value="NM_001023175.2"/>
</dbReference>
<dbReference type="BioGRID" id="276043">
    <property type="interactions" value="14"/>
</dbReference>
<dbReference type="FunCoup" id="O94600">
    <property type="interactions" value="616"/>
</dbReference>
<dbReference type="IntAct" id="O94600">
    <property type="interactions" value="4"/>
</dbReference>
<dbReference type="MINT" id="O94600"/>
<dbReference type="STRING" id="284812.O94600"/>
<dbReference type="iPTMnet" id="O94600"/>
<dbReference type="PaxDb" id="4896-SPCC622.13c.1"/>
<dbReference type="EnsemblFungi" id="SPCC622.13c.1">
    <property type="protein sequence ID" value="SPCC622.13c.1:pep"/>
    <property type="gene ID" value="SPCC622.13c"/>
</dbReference>
<dbReference type="GeneID" id="2539480"/>
<dbReference type="KEGG" id="spo:2539480"/>
<dbReference type="PomBase" id="SPCC622.13c">
    <property type="gene designation" value="tti1"/>
</dbReference>
<dbReference type="VEuPathDB" id="FungiDB:SPCC622.13c"/>
<dbReference type="eggNOG" id="KOG4524">
    <property type="taxonomic scope" value="Eukaryota"/>
</dbReference>
<dbReference type="HOGENOM" id="CLU_005544_0_0_1"/>
<dbReference type="InParanoid" id="O94600"/>
<dbReference type="OMA" id="PHPKKPW"/>
<dbReference type="PhylomeDB" id="O94600"/>
<dbReference type="PRO" id="PR:O94600"/>
<dbReference type="Proteomes" id="UP000002485">
    <property type="component" value="Chromosome III"/>
</dbReference>
<dbReference type="GO" id="GO:0005737">
    <property type="term" value="C:cytoplasm"/>
    <property type="evidence" value="ECO:0000318"/>
    <property type="project" value="GO_Central"/>
</dbReference>
<dbReference type="GO" id="GO:0005829">
    <property type="term" value="C:cytosol"/>
    <property type="evidence" value="ECO:0000305"/>
    <property type="project" value="PomBase"/>
</dbReference>
<dbReference type="GO" id="GO:0110078">
    <property type="term" value="C:TTT Hsp90 cochaperone complex"/>
    <property type="evidence" value="ECO:0000314"/>
    <property type="project" value="PomBase"/>
</dbReference>
<dbReference type="GO" id="GO:0051083">
    <property type="term" value="P:'de novo' cotranslational protein folding"/>
    <property type="evidence" value="ECO:0000269"/>
    <property type="project" value="PomBase"/>
</dbReference>
<dbReference type="InterPro" id="IPR016024">
    <property type="entry name" value="ARM-type_fold"/>
</dbReference>
<dbReference type="InterPro" id="IPR052587">
    <property type="entry name" value="TELO2-interacting_protein_1"/>
</dbReference>
<dbReference type="InterPro" id="IPR016441">
    <property type="entry name" value="Tti1"/>
</dbReference>
<dbReference type="InterPro" id="IPR049362">
    <property type="entry name" value="TTI1_rpt"/>
</dbReference>
<dbReference type="PANTHER" id="PTHR18460">
    <property type="entry name" value="TEL2 INTERACTING PROTEIN 1 TTI1 FAMILY MEMBER"/>
    <property type="match status" value="1"/>
</dbReference>
<dbReference type="PANTHER" id="PTHR18460:SF3">
    <property type="entry name" value="TELO2-INTERACTING PROTEIN 1 HOMOLOG"/>
    <property type="match status" value="1"/>
</dbReference>
<dbReference type="Pfam" id="PF24181">
    <property type="entry name" value="TPR_TTI1_C"/>
    <property type="match status" value="1"/>
</dbReference>
<dbReference type="Pfam" id="PF24173">
    <property type="entry name" value="TPR_TTI1_N"/>
    <property type="match status" value="1"/>
</dbReference>
<dbReference type="Pfam" id="PF21547">
    <property type="entry name" value="TTI1"/>
    <property type="match status" value="1"/>
</dbReference>
<dbReference type="PIRSF" id="PIRSF005250">
    <property type="entry name" value="UCP005250"/>
    <property type="match status" value="1"/>
</dbReference>
<dbReference type="SUPFAM" id="SSF48371">
    <property type="entry name" value="ARM repeat"/>
    <property type="match status" value="1"/>
</dbReference>